<feature type="chain" id="PRO_0000064130" description="Peptidyl-prolyl cis-trans isomerase">
    <location>
        <begin position="1"/>
        <end position="162"/>
    </location>
</feature>
<feature type="domain" description="PPIase cyclophilin-type" evidence="1">
    <location>
        <begin position="5"/>
        <end position="161"/>
    </location>
</feature>
<dbReference type="EC" id="5.2.1.8"/>
<dbReference type="EMBL" id="X53223">
    <property type="protein sequence ID" value="CAA37322.1"/>
    <property type="molecule type" value="Genomic_DNA"/>
</dbReference>
<dbReference type="EMBL" id="D83992">
    <property type="protein sequence ID" value="BAA12183.1"/>
    <property type="molecule type" value="Genomic_DNA"/>
</dbReference>
<dbReference type="EMBL" id="CU329671">
    <property type="protein sequence ID" value="CAB57932.1"/>
    <property type="molecule type" value="Genomic_DNA"/>
</dbReference>
<dbReference type="PIR" id="S11212">
    <property type="entry name" value="CSZPA"/>
</dbReference>
<dbReference type="RefSeq" id="NP_595664.1">
    <property type="nucleotide sequence ID" value="NM_001021559.2"/>
</dbReference>
<dbReference type="SMR" id="P18253"/>
<dbReference type="BioGRID" id="276800">
    <property type="interactions" value="5"/>
</dbReference>
<dbReference type="FunCoup" id="P18253">
    <property type="interactions" value="332"/>
</dbReference>
<dbReference type="STRING" id="284812.P18253"/>
<dbReference type="iPTMnet" id="P18253"/>
<dbReference type="PaxDb" id="4896-SPBC28F2.03.1"/>
<dbReference type="EnsemblFungi" id="SPBC28F2.03.1">
    <property type="protein sequence ID" value="SPBC28F2.03.1:pep"/>
    <property type="gene ID" value="SPBC28F2.03"/>
</dbReference>
<dbReference type="GeneID" id="2540269"/>
<dbReference type="KEGG" id="spo:2540269"/>
<dbReference type="PomBase" id="SPBC28F2.03">
    <property type="gene designation" value="ppi1"/>
</dbReference>
<dbReference type="VEuPathDB" id="FungiDB:SPBC28F2.03"/>
<dbReference type="eggNOG" id="KOG0865">
    <property type="taxonomic scope" value="Eukaryota"/>
</dbReference>
<dbReference type="HOGENOM" id="CLU_012062_4_3_1"/>
<dbReference type="InParanoid" id="P18253"/>
<dbReference type="OMA" id="FKSIVPR"/>
<dbReference type="PhylomeDB" id="P18253"/>
<dbReference type="PRO" id="PR:P18253"/>
<dbReference type="Proteomes" id="UP000002485">
    <property type="component" value="Chromosome II"/>
</dbReference>
<dbReference type="GO" id="GO:0005737">
    <property type="term" value="C:cytoplasm"/>
    <property type="evidence" value="ECO:0000318"/>
    <property type="project" value="GO_Central"/>
</dbReference>
<dbReference type="GO" id="GO:0005829">
    <property type="term" value="C:cytosol"/>
    <property type="evidence" value="ECO:0007005"/>
    <property type="project" value="PomBase"/>
</dbReference>
<dbReference type="GO" id="GO:0005634">
    <property type="term" value="C:nucleus"/>
    <property type="evidence" value="ECO:0007005"/>
    <property type="project" value="PomBase"/>
</dbReference>
<dbReference type="GO" id="GO:0016018">
    <property type="term" value="F:cyclosporin A binding"/>
    <property type="evidence" value="ECO:0000318"/>
    <property type="project" value="GO_Central"/>
</dbReference>
<dbReference type="GO" id="GO:0003755">
    <property type="term" value="F:peptidyl-prolyl cis-trans isomerase activity"/>
    <property type="evidence" value="ECO:0000314"/>
    <property type="project" value="PomBase"/>
</dbReference>
<dbReference type="GO" id="GO:0006457">
    <property type="term" value="P:protein folding"/>
    <property type="evidence" value="ECO:0000318"/>
    <property type="project" value="GO_Central"/>
</dbReference>
<dbReference type="CDD" id="cd01926">
    <property type="entry name" value="cyclophilin_ABH_like"/>
    <property type="match status" value="1"/>
</dbReference>
<dbReference type="FunFam" id="2.40.100.10:FF:000013">
    <property type="entry name" value="Peptidyl-prolyl cis-trans isomerase"/>
    <property type="match status" value="1"/>
</dbReference>
<dbReference type="Gene3D" id="2.40.100.10">
    <property type="entry name" value="Cyclophilin-like"/>
    <property type="match status" value="1"/>
</dbReference>
<dbReference type="InterPro" id="IPR029000">
    <property type="entry name" value="Cyclophilin-like_dom_sf"/>
</dbReference>
<dbReference type="InterPro" id="IPR024936">
    <property type="entry name" value="Cyclophilin-type_PPIase"/>
</dbReference>
<dbReference type="InterPro" id="IPR020892">
    <property type="entry name" value="Cyclophilin-type_PPIase_CS"/>
</dbReference>
<dbReference type="InterPro" id="IPR002130">
    <property type="entry name" value="Cyclophilin-type_PPIase_dom"/>
</dbReference>
<dbReference type="PANTHER" id="PTHR11071">
    <property type="entry name" value="PEPTIDYL-PROLYL CIS-TRANS ISOMERASE"/>
    <property type="match status" value="1"/>
</dbReference>
<dbReference type="PANTHER" id="PTHR11071:SF561">
    <property type="entry name" value="PEPTIDYL-PROLYL CIS-TRANS ISOMERASE D-RELATED"/>
    <property type="match status" value="1"/>
</dbReference>
<dbReference type="Pfam" id="PF00160">
    <property type="entry name" value="Pro_isomerase"/>
    <property type="match status" value="1"/>
</dbReference>
<dbReference type="PIRSF" id="PIRSF001467">
    <property type="entry name" value="Peptidylpro_ismrse"/>
    <property type="match status" value="1"/>
</dbReference>
<dbReference type="PRINTS" id="PR00153">
    <property type="entry name" value="CSAPPISMRASE"/>
</dbReference>
<dbReference type="SUPFAM" id="SSF50891">
    <property type="entry name" value="Cyclophilin-like"/>
    <property type="match status" value="1"/>
</dbReference>
<dbReference type="PROSITE" id="PS00170">
    <property type="entry name" value="CSA_PPIASE_1"/>
    <property type="match status" value="1"/>
</dbReference>
<dbReference type="PROSITE" id="PS50072">
    <property type="entry name" value="CSA_PPIASE_2"/>
    <property type="match status" value="1"/>
</dbReference>
<comment type="function">
    <text>PPIases accelerate the folding of proteins. It catalyzes the cis-trans isomerization of proline imidic peptide bonds in oligopeptides.</text>
</comment>
<comment type="catalytic activity">
    <reaction>
        <text>[protein]-peptidylproline (omega=180) = [protein]-peptidylproline (omega=0)</text>
        <dbReference type="Rhea" id="RHEA:16237"/>
        <dbReference type="Rhea" id="RHEA-COMP:10747"/>
        <dbReference type="Rhea" id="RHEA-COMP:10748"/>
        <dbReference type="ChEBI" id="CHEBI:83833"/>
        <dbReference type="ChEBI" id="CHEBI:83834"/>
        <dbReference type="EC" id="5.2.1.8"/>
    </reaction>
</comment>
<comment type="activity regulation">
    <text>Binds cyclosporin A (CsA). CsA mediates some of its effects via an inhibitory action on PPIase.</text>
</comment>
<comment type="subcellular location">
    <subcellularLocation>
        <location>Cytoplasm</location>
    </subcellularLocation>
</comment>
<comment type="similarity">
    <text evidence="2">Belongs to the cyclophilin-type PPIase family. PPIase A subfamily.</text>
</comment>
<keyword id="KW-0963">Cytoplasm</keyword>
<keyword id="KW-0413">Isomerase</keyword>
<keyword id="KW-1185">Reference proteome</keyword>
<keyword id="KW-0697">Rotamase</keyword>
<organism>
    <name type="scientific">Schizosaccharomyces pombe (strain 972 / ATCC 24843)</name>
    <name type="common">Fission yeast</name>
    <dbReference type="NCBI Taxonomy" id="284812"/>
    <lineage>
        <taxon>Eukaryota</taxon>
        <taxon>Fungi</taxon>
        <taxon>Dikarya</taxon>
        <taxon>Ascomycota</taxon>
        <taxon>Taphrinomycotina</taxon>
        <taxon>Schizosaccharomycetes</taxon>
        <taxon>Schizosaccharomycetales</taxon>
        <taxon>Schizosaccharomycetaceae</taxon>
        <taxon>Schizosaccharomyces</taxon>
    </lineage>
</organism>
<protein>
    <recommendedName>
        <fullName>Peptidyl-prolyl cis-trans isomerase</fullName>
        <shortName>PPIase</shortName>
        <ecNumber>5.2.1.8</ecNumber>
    </recommendedName>
    <alternativeName>
        <fullName>Cyclophilin</fullName>
        <shortName>CPH</shortName>
    </alternativeName>
    <alternativeName>
        <fullName>Cyclosporin A-binding protein</fullName>
    </alternativeName>
    <alternativeName>
        <fullName>Rotamase</fullName>
    </alternativeName>
</protein>
<accession>P18253</accession>
<gene>
    <name type="primary">ppi1</name>
    <name type="synonym">cyp2</name>
    <name type="ORF">SPBC28F2.03</name>
</gene>
<evidence type="ECO:0000255" key="1">
    <source>
        <dbReference type="PROSITE-ProRule" id="PRU00156"/>
    </source>
</evidence>
<evidence type="ECO:0000305" key="2"/>
<proteinExistence type="inferred from homology"/>
<reference key="1">
    <citation type="journal article" date="1990" name="Nucleic Acids Res.">
        <title>The gene for cyclophilin (peptidyl-prolyl cis-trans isomerase) from Schizosaccharomyces pombe.</title>
        <authorList>
            <person name="de Martin R."/>
            <person name="Philipson L."/>
        </authorList>
    </citation>
    <scope>NUCLEOTIDE SEQUENCE [GENOMIC DNA]</scope>
</reference>
<reference key="2">
    <citation type="submission" date="1996-11" db="EMBL/GenBank/DDBJ databases">
        <title>S.pombe chromosome II cosmid 1228 sequence.</title>
        <authorList>
            <person name="Kohnosu A."/>
            <person name="Niwa O."/>
            <person name="Yano M."/>
            <person name="Saitoh S."/>
            <person name="Katayama T."/>
            <person name="Nagao K."/>
            <person name="Yanagida M."/>
        </authorList>
    </citation>
    <scope>NUCLEOTIDE SEQUENCE [GENOMIC DNA]</scope>
    <source>
        <strain>972 / ATCC 24843</strain>
    </source>
</reference>
<reference key="3">
    <citation type="journal article" date="2002" name="Nature">
        <title>The genome sequence of Schizosaccharomyces pombe.</title>
        <authorList>
            <person name="Wood V."/>
            <person name="Gwilliam R."/>
            <person name="Rajandream M.A."/>
            <person name="Lyne M.H."/>
            <person name="Lyne R."/>
            <person name="Stewart A."/>
            <person name="Sgouros J.G."/>
            <person name="Peat N."/>
            <person name="Hayles J."/>
            <person name="Baker S.G."/>
            <person name="Basham D."/>
            <person name="Bowman S."/>
            <person name="Brooks K."/>
            <person name="Brown D."/>
            <person name="Brown S."/>
            <person name="Chillingworth T."/>
            <person name="Churcher C.M."/>
            <person name="Collins M."/>
            <person name="Connor R."/>
            <person name="Cronin A."/>
            <person name="Davis P."/>
            <person name="Feltwell T."/>
            <person name="Fraser A."/>
            <person name="Gentles S."/>
            <person name="Goble A."/>
            <person name="Hamlin N."/>
            <person name="Harris D.E."/>
            <person name="Hidalgo J."/>
            <person name="Hodgson G."/>
            <person name="Holroyd S."/>
            <person name="Hornsby T."/>
            <person name="Howarth S."/>
            <person name="Huckle E.J."/>
            <person name="Hunt S."/>
            <person name="Jagels K."/>
            <person name="James K.D."/>
            <person name="Jones L."/>
            <person name="Jones M."/>
            <person name="Leather S."/>
            <person name="McDonald S."/>
            <person name="McLean J."/>
            <person name="Mooney P."/>
            <person name="Moule S."/>
            <person name="Mungall K.L."/>
            <person name="Murphy L.D."/>
            <person name="Niblett D."/>
            <person name="Odell C."/>
            <person name="Oliver K."/>
            <person name="O'Neil S."/>
            <person name="Pearson D."/>
            <person name="Quail M.A."/>
            <person name="Rabbinowitsch E."/>
            <person name="Rutherford K.M."/>
            <person name="Rutter S."/>
            <person name="Saunders D."/>
            <person name="Seeger K."/>
            <person name="Sharp S."/>
            <person name="Skelton J."/>
            <person name="Simmonds M.N."/>
            <person name="Squares R."/>
            <person name="Squares S."/>
            <person name="Stevens K."/>
            <person name="Taylor K."/>
            <person name="Taylor R.G."/>
            <person name="Tivey A."/>
            <person name="Walsh S.V."/>
            <person name="Warren T."/>
            <person name="Whitehead S."/>
            <person name="Woodward J.R."/>
            <person name="Volckaert G."/>
            <person name="Aert R."/>
            <person name="Robben J."/>
            <person name="Grymonprez B."/>
            <person name="Weltjens I."/>
            <person name="Vanstreels E."/>
            <person name="Rieger M."/>
            <person name="Schaefer M."/>
            <person name="Mueller-Auer S."/>
            <person name="Gabel C."/>
            <person name="Fuchs M."/>
            <person name="Duesterhoeft A."/>
            <person name="Fritzc C."/>
            <person name="Holzer E."/>
            <person name="Moestl D."/>
            <person name="Hilbert H."/>
            <person name="Borzym K."/>
            <person name="Langer I."/>
            <person name="Beck A."/>
            <person name="Lehrach H."/>
            <person name="Reinhardt R."/>
            <person name="Pohl T.M."/>
            <person name="Eger P."/>
            <person name="Zimmermann W."/>
            <person name="Wedler H."/>
            <person name="Wambutt R."/>
            <person name="Purnelle B."/>
            <person name="Goffeau A."/>
            <person name="Cadieu E."/>
            <person name="Dreano S."/>
            <person name="Gloux S."/>
            <person name="Lelaure V."/>
            <person name="Mottier S."/>
            <person name="Galibert F."/>
            <person name="Aves S.J."/>
            <person name="Xiang Z."/>
            <person name="Hunt C."/>
            <person name="Moore K."/>
            <person name="Hurst S.M."/>
            <person name="Lucas M."/>
            <person name="Rochet M."/>
            <person name="Gaillardin C."/>
            <person name="Tallada V.A."/>
            <person name="Garzon A."/>
            <person name="Thode G."/>
            <person name="Daga R.R."/>
            <person name="Cruzado L."/>
            <person name="Jimenez J."/>
            <person name="Sanchez M."/>
            <person name="del Rey F."/>
            <person name="Benito J."/>
            <person name="Dominguez A."/>
            <person name="Revuelta J.L."/>
            <person name="Moreno S."/>
            <person name="Armstrong J."/>
            <person name="Forsburg S.L."/>
            <person name="Cerutti L."/>
            <person name="Lowe T."/>
            <person name="McCombie W.R."/>
            <person name="Paulsen I."/>
            <person name="Potashkin J."/>
            <person name="Shpakovski G.V."/>
            <person name="Ussery D."/>
            <person name="Barrell B.G."/>
            <person name="Nurse P."/>
        </authorList>
    </citation>
    <scope>NUCLEOTIDE SEQUENCE [LARGE SCALE GENOMIC DNA]</scope>
    <source>
        <strain>972 / ATCC 24843</strain>
    </source>
</reference>
<name>CYPH_SCHPO</name>
<sequence>MSNCFFDVIANGQPLGRIVFKLFDDVVPKTAANFRALCTGEKGYGYAGSTFHRVIPQFMLQGGDFTRGNGTGGKSIYGEKFPDENFALKHNKPGLLSMANAGPNTNGSQFFITTVVTPWLDGKHVVFGEVTEGMDVVKKVESLGSNSGATRARIVIDKCGTV</sequence>